<proteinExistence type="inferred from homology"/>
<name>U73D1_ARATH</name>
<dbReference type="EC" id="2.4.1.-"/>
<dbReference type="EMBL" id="AL132958">
    <property type="protein sequence ID" value="CAB64218.1"/>
    <property type="molecule type" value="Genomic_DNA"/>
</dbReference>
<dbReference type="EMBL" id="CP002686">
    <property type="protein sequence ID" value="AEE79042.2"/>
    <property type="status" value="ALT_INIT"/>
    <property type="molecule type" value="Genomic_DNA"/>
</dbReference>
<dbReference type="PIR" id="T46161">
    <property type="entry name" value="T46161"/>
</dbReference>
<dbReference type="RefSeq" id="NP_190883.2">
    <property type="nucleotide sequence ID" value="NM_115175.2"/>
</dbReference>
<dbReference type="SMR" id="Q9SCP6"/>
<dbReference type="BioGRID" id="9798">
    <property type="interactions" value="1"/>
</dbReference>
<dbReference type="FunCoup" id="Q9SCP6">
    <property type="interactions" value="111"/>
</dbReference>
<dbReference type="STRING" id="3702.Q9SCP6"/>
<dbReference type="CAZy" id="GT1">
    <property type="family name" value="Glycosyltransferase Family 1"/>
</dbReference>
<dbReference type="PaxDb" id="3702-AT3G53150.1"/>
<dbReference type="ProteomicsDB" id="234645"/>
<dbReference type="GeneID" id="824481"/>
<dbReference type="KEGG" id="ath:AT3G53150"/>
<dbReference type="Araport" id="AT3G53150"/>
<dbReference type="TAIR" id="AT3G53150"/>
<dbReference type="eggNOG" id="KOG1192">
    <property type="taxonomic scope" value="Eukaryota"/>
</dbReference>
<dbReference type="HOGENOM" id="CLU_001724_2_2_1"/>
<dbReference type="InParanoid" id="Q9SCP6"/>
<dbReference type="PhylomeDB" id="Q9SCP6"/>
<dbReference type="BioCyc" id="ARA:AT3G53150-MONOMER"/>
<dbReference type="PRO" id="PR:Q9SCP6"/>
<dbReference type="Proteomes" id="UP000006548">
    <property type="component" value="Chromosome 3"/>
</dbReference>
<dbReference type="ExpressionAtlas" id="Q9SCP6">
    <property type="expression patterns" value="baseline and differential"/>
</dbReference>
<dbReference type="GO" id="GO:0035251">
    <property type="term" value="F:UDP-glucosyltransferase activity"/>
    <property type="evidence" value="ECO:0000318"/>
    <property type="project" value="GO_Central"/>
</dbReference>
<dbReference type="CDD" id="cd03784">
    <property type="entry name" value="GT1_Gtf-like"/>
    <property type="match status" value="1"/>
</dbReference>
<dbReference type="FunFam" id="3.40.50.2000:FF:000047">
    <property type="entry name" value="Glycosyltransferase"/>
    <property type="match status" value="1"/>
</dbReference>
<dbReference type="FunFam" id="3.40.50.2000:FF:000071">
    <property type="entry name" value="Glycosyltransferase"/>
    <property type="match status" value="1"/>
</dbReference>
<dbReference type="Gene3D" id="3.40.50.2000">
    <property type="entry name" value="Glycogen Phosphorylase B"/>
    <property type="match status" value="2"/>
</dbReference>
<dbReference type="InterPro" id="IPR002213">
    <property type="entry name" value="UDP_glucos_trans"/>
</dbReference>
<dbReference type="InterPro" id="IPR035595">
    <property type="entry name" value="UDP_glycos_trans_CS"/>
</dbReference>
<dbReference type="PANTHER" id="PTHR48047">
    <property type="entry name" value="GLYCOSYLTRANSFERASE"/>
    <property type="match status" value="1"/>
</dbReference>
<dbReference type="PANTHER" id="PTHR48047:SF143">
    <property type="entry name" value="UDP-GLYCOSYLTRANSFERASE 73D1"/>
    <property type="match status" value="1"/>
</dbReference>
<dbReference type="Pfam" id="PF00201">
    <property type="entry name" value="UDPGT"/>
    <property type="match status" value="1"/>
</dbReference>
<dbReference type="SUPFAM" id="SSF53756">
    <property type="entry name" value="UDP-Glycosyltransferase/glycogen phosphorylase"/>
    <property type="match status" value="1"/>
</dbReference>
<dbReference type="PROSITE" id="PS00375">
    <property type="entry name" value="UDPGT"/>
    <property type="match status" value="1"/>
</dbReference>
<reference key="1">
    <citation type="journal article" date="2000" name="Nature">
        <title>Sequence and analysis of chromosome 3 of the plant Arabidopsis thaliana.</title>
        <authorList>
            <person name="Salanoubat M."/>
            <person name="Lemcke K."/>
            <person name="Rieger M."/>
            <person name="Ansorge W."/>
            <person name="Unseld M."/>
            <person name="Fartmann B."/>
            <person name="Valle G."/>
            <person name="Bloecker H."/>
            <person name="Perez-Alonso M."/>
            <person name="Obermaier B."/>
            <person name="Delseny M."/>
            <person name="Boutry M."/>
            <person name="Grivell L.A."/>
            <person name="Mache R."/>
            <person name="Puigdomenech P."/>
            <person name="De Simone V."/>
            <person name="Choisne N."/>
            <person name="Artiguenave F."/>
            <person name="Robert C."/>
            <person name="Brottier P."/>
            <person name="Wincker P."/>
            <person name="Cattolico L."/>
            <person name="Weissenbach J."/>
            <person name="Saurin W."/>
            <person name="Quetier F."/>
            <person name="Schaefer M."/>
            <person name="Mueller-Auer S."/>
            <person name="Gabel C."/>
            <person name="Fuchs M."/>
            <person name="Benes V."/>
            <person name="Wurmbach E."/>
            <person name="Drzonek H."/>
            <person name="Erfle H."/>
            <person name="Jordan N."/>
            <person name="Bangert S."/>
            <person name="Wiedelmann R."/>
            <person name="Kranz H."/>
            <person name="Voss H."/>
            <person name="Holland R."/>
            <person name="Brandt P."/>
            <person name="Nyakatura G."/>
            <person name="Vezzi A."/>
            <person name="D'Angelo M."/>
            <person name="Pallavicini A."/>
            <person name="Toppo S."/>
            <person name="Simionati B."/>
            <person name="Conrad A."/>
            <person name="Hornischer K."/>
            <person name="Kauer G."/>
            <person name="Loehnert T.-H."/>
            <person name="Nordsiek G."/>
            <person name="Reichelt J."/>
            <person name="Scharfe M."/>
            <person name="Schoen O."/>
            <person name="Bargues M."/>
            <person name="Terol J."/>
            <person name="Climent J."/>
            <person name="Navarro P."/>
            <person name="Collado C."/>
            <person name="Perez-Perez A."/>
            <person name="Ottenwaelder B."/>
            <person name="Duchemin D."/>
            <person name="Cooke R."/>
            <person name="Laudie M."/>
            <person name="Berger-Llauro C."/>
            <person name="Purnelle B."/>
            <person name="Masuy D."/>
            <person name="de Haan M."/>
            <person name="Maarse A.C."/>
            <person name="Alcaraz J.-P."/>
            <person name="Cottet A."/>
            <person name="Casacuberta E."/>
            <person name="Monfort A."/>
            <person name="Argiriou A."/>
            <person name="Flores M."/>
            <person name="Liguori R."/>
            <person name="Vitale D."/>
            <person name="Mannhaupt G."/>
            <person name="Haase D."/>
            <person name="Schoof H."/>
            <person name="Rudd S."/>
            <person name="Zaccaria P."/>
            <person name="Mewes H.-W."/>
            <person name="Mayer K.F.X."/>
            <person name="Kaul S."/>
            <person name="Town C.D."/>
            <person name="Koo H.L."/>
            <person name="Tallon L.J."/>
            <person name="Jenkins J."/>
            <person name="Rooney T."/>
            <person name="Rizzo M."/>
            <person name="Walts A."/>
            <person name="Utterback T."/>
            <person name="Fujii C.Y."/>
            <person name="Shea T.P."/>
            <person name="Creasy T.H."/>
            <person name="Haas B."/>
            <person name="Maiti R."/>
            <person name="Wu D."/>
            <person name="Peterson J."/>
            <person name="Van Aken S."/>
            <person name="Pai G."/>
            <person name="Militscher J."/>
            <person name="Sellers P."/>
            <person name="Gill J.E."/>
            <person name="Feldblyum T.V."/>
            <person name="Preuss D."/>
            <person name="Lin X."/>
            <person name="Nierman W.C."/>
            <person name="Salzberg S.L."/>
            <person name="White O."/>
            <person name="Venter J.C."/>
            <person name="Fraser C.M."/>
            <person name="Kaneko T."/>
            <person name="Nakamura Y."/>
            <person name="Sato S."/>
            <person name="Kato T."/>
            <person name="Asamizu E."/>
            <person name="Sasamoto S."/>
            <person name="Kimura T."/>
            <person name="Idesawa K."/>
            <person name="Kawashima K."/>
            <person name="Kishida Y."/>
            <person name="Kiyokawa C."/>
            <person name="Kohara M."/>
            <person name="Matsumoto M."/>
            <person name="Matsuno A."/>
            <person name="Muraki A."/>
            <person name="Nakayama S."/>
            <person name="Nakazaki N."/>
            <person name="Shinpo S."/>
            <person name="Takeuchi C."/>
            <person name="Wada T."/>
            <person name="Watanabe A."/>
            <person name="Yamada M."/>
            <person name="Yasuda M."/>
            <person name="Tabata S."/>
        </authorList>
    </citation>
    <scope>NUCLEOTIDE SEQUENCE [LARGE SCALE GENOMIC DNA]</scope>
    <source>
        <strain>cv. Columbia</strain>
    </source>
</reference>
<reference key="2">
    <citation type="journal article" date="2017" name="Plant J.">
        <title>Araport11: a complete reannotation of the Arabidopsis thaliana reference genome.</title>
        <authorList>
            <person name="Cheng C.Y."/>
            <person name="Krishnakumar V."/>
            <person name="Chan A.P."/>
            <person name="Thibaud-Nissen F."/>
            <person name="Schobel S."/>
            <person name="Town C.D."/>
        </authorList>
    </citation>
    <scope>GENOME REANNOTATION</scope>
    <source>
        <strain>cv. Columbia</strain>
    </source>
</reference>
<reference key="3">
    <citation type="journal article" date="2001" name="J. Biol. Chem.">
        <title>Phylogenetic analysis of the UDP-glycosyltransferase multigene family of Arabidopsis thaliana.</title>
        <authorList>
            <person name="Li Y."/>
            <person name="Baldauf S."/>
            <person name="Lim E.K."/>
            <person name="Bowles D.J."/>
        </authorList>
    </citation>
    <scope>GENE FAMILY</scope>
</reference>
<accession>Q9SCP6</accession>
<accession>A0A2H1ZEK5</accession>
<keyword id="KW-0328">Glycosyltransferase</keyword>
<keyword id="KW-1185">Reference proteome</keyword>
<keyword id="KW-0808">Transferase</keyword>
<organism>
    <name type="scientific">Arabidopsis thaliana</name>
    <name type="common">Mouse-ear cress</name>
    <dbReference type="NCBI Taxonomy" id="3702"/>
    <lineage>
        <taxon>Eukaryota</taxon>
        <taxon>Viridiplantae</taxon>
        <taxon>Streptophyta</taxon>
        <taxon>Embryophyta</taxon>
        <taxon>Tracheophyta</taxon>
        <taxon>Spermatophyta</taxon>
        <taxon>Magnoliopsida</taxon>
        <taxon>eudicotyledons</taxon>
        <taxon>Gunneridae</taxon>
        <taxon>Pentapetalae</taxon>
        <taxon>rosids</taxon>
        <taxon>malvids</taxon>
        <taxon>Brassicales</taxon>
        <taxon>Brassicaceae</taxon>
        <taxon>Camelineae</taxon>
        <taxon>Arabidopsis</taxon>
    </lineage>
</organism>
<comment type="similarity">
    <text evidence="2">Belongs to the UDP-glycosyltransferase family.</text>
</comment>
<comment type="sequence caution" evidence="2">
    <conflict type="erroneous initiation">
        <sequence resource="EMBL-CDS" id="AEE79042"/>
    </conflict>
    <text>Extended N-terminus.</text>
</comment>
<protein>
    <recommendedName>
        <fullName>UDP-glycosyltransferase 73D1</fullName>
        <ecNumber>2.4.1.-</ecNumber>
    </recommendedName>
</protein>
<feature type="chain" id="PRO_0000409099" description="UDP-glycosyltransferase 73D1">
    <location>
        <begin position="1"/>
        <end position="507"/>
    </location>
</feature>
<feature type="binding site" evidence="1">
    <location>
        <position position="298"/>
    </location>
    <ligand>
        <name>UDP-alpha-D-glucose</name>
        <dbReference type="ChEBI" id="CHEBI:58885"/>
    </ligand>
</feature>
<feature type="binding site" evidence="1">
    <location>
        <begin position="359"/>
        <end position="361"/>
    </location>
    <ligand>
        <name>UDP-alpha-D-glucose</name>
        <dbReference type="ChEBI" id="CHEBI:58885"/>
    </ligand>
</feature>
<feature type="binding site" evidence="1">
    <location>
        <begin position="376"/>
        <end position="384"/>
    </location>
    <ligand>
        <name>UDP-alpha-D-glucose</name>
        <dbReference type="ChEBI" id="CHEBI:58885"/>
    </ligand>
</feature>
<feature type="binding site" evidence="1">
    <location>
        <begin position="398"/>
        <end position="401"/>
    </location>
    <ligand>
        <name>UDP-alpha-D-glucose</name>
        <dbReference type="ChEBI" id="CHEBI:58885"/>
    </ligand>
</feature>
<gene>
    <name type="primary">UGT73D1</name>
    <name type="ordered locus">At3g53150</name>
    <name type="ORF">T4D2.80</name>
</gene>
<sequence length="507" mass="57450">MESKIVSKAKRLHFVLIPLMAQGHLIPMVDISKILARQGNIVTIVTTPQNASRFAKTVDRARLESGLEINVVKFPIPYKEFGLPKDCETLDTLPSKDLLRRFYDAVDKLQEPMERFLEQQDIPPSCIISDKCLFWTSRTAKRFKIPRIVFHGMCCFSLLSSHNIHLHSPHLSVSSAVEPFPIPGMPHRIEIARAQLPGAFEKLANMDDVREKMRESESEAFGVIVNSFQELEPGYAEAYAEAINKKVWFVGPVSLCNDRMADLFDRGSNGNIAISETECLQFLDSMRPRSVLYVSLGSLCRLIPNQLIELGLGLEESGKPFIWVIKTEEKHMIELDEWLKRENFEERVRGRGIVIKGWSPQAMILSHGSTGGFLTHCGWNSTIEAICFGVPMITWPLFAEQFLNEKLIVEVLNIGVRVGVEIPVRWGDEERLGVLVKKPSVVKAIKLLMDQDCQRVDENDDDNEFVRRRRRIQELAVMAKKAVEEKGSSSINVSILIQDVLEQLSLV</sequence>
<evidence type="ECO:0000250" key="1"/>
<evidence type="ECO:0000305" key="2"/>